<gene>
    <name type="primary">MB</name>
</gene>
<protein>
    <recommendedName>
        <fullName>Myoglobin</fullName>
    </recommendedName>
    <alternativeName>
        <fullName evidence="1">Nitrite reductase MB</fullName>
        <ecNumber evidence="1">1.7.-.-</ecNumber>
    </alternativeName>
    <alternativeName>
        <fullName evidence="1">Pseudoperoxidase MB</fullName>
        <ecNumber evidence="1">1.11.1.-</ecNumber>
    </alternativeName>
</protein>
<evidence type="ECO:0000250" key="1">
    <source>
        <dbReference type="UniProtKB" id="P02144"/>
    </source>
</evidence>
<evidence type="ECO:0000250" key="2">
    <source>
        <dbReference type="UniProtKB" id="P02185"/>
    </source>
</evidence>
<evidence type="ECO:0000250" key="3">
    <source>
        <dbReference type="UniProtKB" id="P02189"/>
    </source>
</evidence>
<evidence type="ECO:0000250" key="4">
    <source>
        <dbReference type="UniProtKB" id="P04247"/>
    </source>
</evidence>
<evidence type="ECO:0000250" key="5">
    <source>
        <dbReference type="UniProtKB" id="P68082"/>
    </source>
</evidence>
<evidence type="ECO:0000250" key="6">
    <source>
        <dbReference type="UniProtKB" id="Q9QZ76"/>
    </source>
</evidence>
<evidence type="ECO:0000255" key="7">
    <source>
        <dbReference type="PROSITE-ProRule" id="PRU00238"/>
    </source>
</evidence>
<evidence type="ECO:0000269" key="8">
    <source>
    </source>
</evidence>
<keyword id="KW-0963">Cytoplasm</keyword>
<keyword id="KW-0903">Direct protein sequencing</keyword>
<keyword id="KW-0349">Heme</keyword>
<keyword id="KW-0408">Iron</keyword>
<keyword id="KW-0479">Metal-binding</keyword>
<keyword id="KW-0514">Muscle protein</keyword>
<keyword id="KW-0560">Oxidoreductase</keyword>
<keyword id="KW-0561">Oxygen transport</keyword>
<keyword id="KW-0597">Phosphoprotein</keyword>
<keyword id="KW-0813">Transport</keyword>
<sequence length="154" mass="17075">MGLSDGEWQLVLNAWGKVETDIGGHGQEVLIRLFKGHPETLEKFDKFKHLKSEDEMKASEDLKKHGTTVLTALGNILKKKGQHEAELAPLAQSHATKHKIPVKYLEFISEAIIQVLESKHPGDFGADAQGAMSKALELFRNDIAAKYKELGFQG</sequence>
<accession>P20856</accession>
<organism>
    <name type="scientific">Ctenodactylus gundi</name>
    <name type="common">Northern gundi</name>
    <dbReference type="NCBI Taxonomy" id="10166"/>
    <lineage>
        <taxon>Eukaryota</taxon>
        <taxon>Metazoa</taxon>
        <taxon>Chordata</taxon>
        <taxon>Craniata</taxon>
        <taxon>Vertebrata</taxon>
        <taxon>Euteleostomi</taxon>
        <taxon>Mammalia</taxon>
        <taxon>Eutheria</taxon>
        <taxon>Euarchontoglires</taxon>
        <taxon>Glires</taxon>
        <taxon>Rodentia</taxon>
        <taxon>Hystricomorpha</taxon>
        <taxon>Ctenodactylidae</taxon>
        <taxon>Ctenodactylus</taxon>
    </lineage>
</organism>
<proteinExistence type="evidence at protein level"/>
<reference key="1">
    <citation type="journal article" date="1990" name="Biol. Chem. Hoppe-Seyler">
        <title>The primary structures of gundi (Ctenodactylus gundi, Rodentia) hemoglobin and myoglobin.</title>
        <authorList>
            <person name="Beintema J.J."/>
            <person name="Rodewald K."/>
            <person name="Braunitzer G."/>
        </authorList>
    </citation>
    <scope>PROTEIN SEQUENCE OF 2-154</scope>
</reference>
<name>MYG_CTEGU</name>
<comment type="function">
    <text evidence="1">Monomeric heme protein which primary function is to store oxygen and facilitate its diffusion within muscle tissues. Reversibly binds oxygen through a pentacoordinated heme iron and enables its timely and efficient release as needed during periods of heightened demand. Depending on the oxidative conditions of tissues and cells, and in addition to its ability to bind oxygen, it also has a nitrite reductase activity whereby it regulates the production of bioactive nitric oxide. Under stress conditions, like hypoxia and anoxia, it also protects cells against reactive oxygen species thanks to its pseudoperoxidase activity.</text>
</comment>
<comment type="catalytic activity">
    <reaction evidence="1">
        <text>Fe(III)-heme b-[protein] + nitric oxide + H2O = Fe(II)-heme b-[protein] + nitrite + 2 H(+)</text>
        <dbReference type="Rhea" id="RHEA:77711"/>
        <dbReference type="Rhea" id="RHEA-COMP:18975"/>
        <dbReference type="Rhea" id="RHEA-COMP:18976"/>
        <dbReference type="ChEBI" id="CHEBI:15377"/>
        <dbReference type="ChEBI" id="CHEBI:15378"/>
        <dbReference type="ChEBI" id="CHEBI:16301"/>
        <dbReference type="ChEBI" id="CHEBI:16480"/>
        <dbReference type="ChEBI" id="CHEBI:55376"/>
        <dbReference type="ChEBI" id="CHEBI:60344"/>
    </reaction>
    <physiologicalReaction direction="right-to-left" evidence="1">
        <dbReference type="Rhea" id="RHEA:77713"/>
    </physiologicalReaction>
</comment>
<comment type="catalytic activity">
    <reaction evidence="1">
        <text>H2O2 + AH2 = A + 2 H2O</text>
        <dbReference type="Rhea" id="RHEA:30275"/>
        <dbReference type="ChEBI" id="CHEBI:13193"/>
        <dbReference type="ChEBI" id="CHEBI:15377"/>
        <dbReference type="ChEBI" id="CHEBI:16240"/>
        <dbReference type="ChEBI" id="CHEBI:17499"/>
    </reaction>
</comment>
<comment type="subunit">
    <text evidence="2">Monomeric.</text>
</comment>
<comment type="subcellular location">
    <subcellularLocation>
        <location evidence="1">Cytoplasm</location>
        <location evidence="1">Sarcoplasm</location>
    </subcellularLocation>
</comment>
<comment type="similarity">
    <text evidence="7">Belongs to the globin family.</text>
</comment>
<dbReference type="EC" id="1.7.-.-" evidence="1"/>
<dbReference type="EC" id="1.11.1.-" evidence="1"/>
<dbReference type="PIR" id="S13387">
    <property type="entry name" value="MYRTNG"/>
</dbReference>
<dbReference type="SMR" id="P20856"/>
<dbReference type="GO" id="GO:0070062">
    <property type="term" value="C:extracellular exosome"/>
    <property type="evidence" value="ECO:0007669"/>
    <property type="project" value="TreeGrafter"/>
</dbReference>
<dbReference type="GO" id="GO:0016528">
    <property type="term" value="C:sarcoplasm"/>
    <property type="evidence" value="ECO:0000250"/>
    <property type="project" value="UniProtKB"/>
</dbReference>
<dbReference type="GO" id="GO:0020037">
    <property type="term" value="F:heme binding"/>
    <property type="evidence" value="ECO:0007669"/>
    <property type="project" value="InterPro"/>
</dbReference>
<dbReference type="GO" id="GO:0046872">
    <property type="term" value="F:metal ion binding"/>
    <property type="evidence" value="ECO:0007669"/>
    <property type="project" value="UniProtKB-KW"/>
</dbReference>
<dbReference type="GO" id="GO:0098809">
    <property type="term" value="F:nitrite reductase activity"/>
    <property type="evidence" value="ECO:0000250"/>
    <property type="project" value="UniProtKB"/>
</dbReference>
<dbReference type="GO" id="GO:0019825">
    <property type="term" value="F:oxygen binding"/>
    <property type="evidence" value="ECO:0007669"/>
    <property type="project" value="InterPro"/>
</dbReference>
<dbReference type="GO" id="GO:0005344">
    <property type="term" value="F:oxygen carrier activity"/>
    <property type="evidence" value="ECO:0000250"/>
    <property type="project" value="UniProtKB"/>
</dbReference>
<dbReference type="GO" id="GO:0004601">
    <property type="term" value="F:peroxidase activity"/>
    <property type="evidence" value="ECO:0000250"/>
    <property type="project" value="UniProtKB"/>
</dbReference>
<dbReference type="GO" id="GO:0019430">
    <property type="term" value="P:removal of superoxide radicals"/>
    <property type="evidence" value="ECO:0000250"/>
    <property type="project" value="UniProtKB"/>
</dbReference>
<dbReference type="CDD" id="cd08926">
    <property type="entry name" value="Mb"/>
    <property type="match status" value="1"/>
</dbReference>
<dbReference type="Gene3D" id="6.10.140.2100">
    <property type="match status" value="1"/>
</dbReference>
<dbReference type="Gene3D" id="6.10.140.2110">
    <property type="match status" value="1"/>
</dbReference>
<dbReference type="InterPro" id="IPR000971">
    <property type="entry name" value="Globin"/>
</dbReference>
<dbReference type="InterPro" id="IPR009050">
    <property type="entry name" value="Globin-like_sf"/>
</dbReference>
<dbReference type="InterPro" id="IPR002335">
    <property type="entry name" value="Myoglobin"/>
</dbReference>
<dbReference type="PANTHER" id="PTHR47132">
    <property type="entry name" value="MYOGLOBIN"/>
    <property type="match status" value="1"/>
</dbReference>
<dbReference type="PANTHER" id="PTHR47132:SF1">
    <property type="entry name" value="MYOGLOBIN"/>
    <property type="match status" value="1"/>
</dbReference>
<dbReference type="Pfam" id="PF00042">
    <property type="entry name" value="Globin"/>
    <property type="match status" value="1"/>
</dbReference>
<dbReference type="PRINTS" id="PR00613">
    <property type="entry name" value="MYOGLOBIN"/>
</dbReference>
<dbReference type="SUPFAM" id="SSF46458">
    <property type="entry name" value="Globin-like"/>
    <property type="match status" value="1"/>
</dbReference>
<dbReference type="PROSITE" id="PS01033">
    <property type="entry name" value="GLOBIN"/>
    <property type="match status" value="1"/>
</dbReference>
<feature type="initiator methionine" description="Removed" evidence="8">
    <location>
        <position position="1"/>
    </location>
</feature>
<feature type="chain" id="PRO_0000053286" description="Myoglobin">
    <location>
        <begin position="2"/>
        <end position="154"/>
    </location>
</feature>
<feature type="domain" description="Globin" evidence="7">
    <location>
        <begin position="2"/>
        <end position="148"/>
    </location>
</feature>
<feature type="binding site" evidence="5">
    <location>
        <position position="65"/>
    </location>
    <ligand>
        <name>nitrite</name>
        <dbReference type="ChEBI" id="CHEBI:16301"/>
    </ligand>
</feature>
<feature type="binding site" evidence="3 7">
    <location>
        <position position="65"/>
    </location>
    <ligand>
        <name>O2</name>
        <dbReference type="ChEBI" id="CHEBI:15379"/>
    </ligand>
</feature>
<feature type="binding site" description="proximal binding residue" evidence="1">
    <location>
        <position position="94"/>
    </location>
    <ligand>
        <name>heme b</name>
        <dbReference type="ChEBI" id="CHEBI:60344"/>
    </ligand>
    <ligandPart>
        <name>Fe</name>
        <dbReference type="ChEBI" id="CHEBI:18248"/>
    </ligandPart>
</feature>
<feature type="modified residue" description="Phosphoserine" evidence="6">
    <location>
        <position position="4"/>
    </location>
</feature>
<feature type="modified residue" description="Phosphothreonine" evidence="4">
    <location>
        <position position="68"/>
    </location>
</feature>